<protein>
    <recommendedName>
        <fullName evidence="1">Rqc2 homolog RqcH</fullName>
        <shortName evidence="1">RqcH</shortName>
    </recommendedName>
    <alternativeName>
        <fullName evidence="3">Anchorless FBPS</fullName>
    </alternativeName>
    <alternativeName>
        <fullName evidence="3">Fibronectin-binding protein</fullName>
    </alternativeName>
</protein>
<accession>A4VWG9</accession>
<feature type="chain" id="PRO_0000448048" description="Rqc2 homolog RqcH">
    <location>
        <begin position="1"/>
        <end position="552"/>
    </location>
</feature>
<feature type="coiled-coil region" evidence="2">
    <location>
        <begin position="271"/>
        <end position="317"/>
    </location>
</feature>
<feature type="coiled-coil region" evidence="2">
    <location>
        <begin position="357"/>
        <end position="398"/>
    </location>
</feature>
<feature type="helix" evidence="7">
    <location>
        <begin position="5"/>
        <end position="19"/>
    </location>
</feature>
<feature type="strand" evidence="7">
    <location>
        <begin position="23"/>
        <end position="31"/>
    </location>
</feature>
<feature type="strand" evidence="7">
    <location>
        <begin position="34"/>
        <end position="41"/>
    </location>
</feature>
<feature type="strand" evidence="7">
    <location>
        <begin position="44"/>
        <end position="51"/>
    </location>
</feature>
<feature type="turn" evidence="7">
    <location>
        <begin position="54"/>
        <end position="56"/>
    </location>
</feature>
<feature type="strand" evidence="7">
    <location>
        <begin position="58"/>
        <end position="61"/>
    </location>
</feature>
<feature type="helix" evidence="7">
    <location>
        <begin position="74"/>
        <end position="83"/>
    </location>
</feature>
<feature type="strand" evidence="7">
    <location>
        <begin position="87"/>
        <end position="93"/>
    </location>
</feature>
<feature type="strand" evidence="7">
    <location>
        <begin position="97"/>
        <end position="107"/>
    </location>
</feature>
<feature type="strand" evidence="7">
    <location>
        <begin position="113"/>
        <end position="121"/>
    </location>
</feature>
<feature type="helix" evidence="7">
    <location>
        <begin position="124"/>
        <end position="126"/>
    </location>
</feature>
<feature type="strand" evidence="7">
    <location>
        <begin position="128"/>
        <end position="133"/>
    </location>
</feature>
<feature type="turn" evidence="7">
    <location>
        <begin position="134"/>
        <end position="137"/>
    </location>
</feature>
<feature type="strand" evidence="7">
    <location>
        <begin position="138"/>
        <end position="144"/>
    </location>
</feature>
<feature type="helix" evidence="7">
    <location>
        <begin position="178"/>
        <end position="187"/>
    </location>
</feature>
<feature type="helix" evidence="7">
    <location>
        <begin position="192"/>
        <end position="198"/>
    </location>
</feature>
<feature type="helix" evidence="7">
    <location>
        <begin position="204"/>
        <end position="211"/>
    </location>
</feature>
<feature type="strand" evidence="7">
    <location>
        <begin position="215"/>
        <end position="217"/>
    </location>
</feature>
<feature type="helix" evidence="7">
    <location>
        <begin position="218"/>
        <end position="226"/>
    </location>
</feature>
<feature type="strand" evidence="7">
    <location>
        <begin position="236"/>
        <end position="242"/>
    </location>
</feature>
<feature type="helix" evidence="7">
    <location>
        <begin position="257"/>
        <end position="264"/>
    </location>
</feature>
<feature type="turn" evidence="7">
    <location>
        <begin position="265"/>
        <end position="267"/>
    </location>
</feature>
<feature type="helix" evidence="6">
    <location>
        <begin position="274"/>
        <end position="304"/>
    </location>
</feature>
<feature type="helix" evidence="6">
    <location>
        <begin position="305"/>
        <end position="308"/>
    </location>
</feature>
<feature type="helix" evidence="6">
    <location>
        <begin position="309"/>
        <end position="317"/>
    </location>
</feature>
<feature type="helix" evidence="6">
    <location>
        <begin position="358"/>
        <end position="397"/>
    </location>
</feature>
<feature type="helix" evidence="6">
    <location>
        <begin position="401"/>
        <end position="413"/>
    </location>
</feature>
<feature type="strand" evidence="6">
    <location>
        <begin position="432"/>
        <end position="435"/>
    </location>
</feature>
<feature type="strand" evidence="6">
    <location>
        <begin position="442"/>
        <end position="445"/>
    </location>
</feature>
<feature type="helix" evidence="6">
    <location>
        <begin position="449"/>
        <end position="457"/>
    </location>
</feature>
<feature type="strand" evidence="6">
    <location>
        <begin position="465"/>
        <end position="469"/>
    </location>
</feature>
<feature type="strand" evidence="6">
    <location>
        <begin position="477"/>
        <end position="481"/>
    </location>
</feature>
<feature type="helix" evidence="6">
    <location>
        <begin position="487"/>
        <end position="499"/>
    </location>
</feature>
<feature type="turn" evidence="6">
    <location>
        <begin position="502"/>
        <end position="505"/>
    </location>
</feature>
<feature type="strand" evidence="6">
    <location>
        <begin position="506"/>
        <end position="515"/>
    </location>
</feature>
<feature type="helix" evidence="6">
    <location>
        <begin position="516"/>
        <end position="518"/>
    </location>
</feature>
<feature type="strand" evidence="6">
    <location>
        <begin position="536"/>
        <end position="540"/>
    </location>
</feature>
<feature type="helix" evidence="6">
    <location>
        <begin position="544"/>
        <end position="549"/>
    </location>
</feature>
<organism>
    <name type="scientific">Streptococcus suis (strain 05ZYH33)</name>
    <dbReference type="NCBI Taxonomy" id="391295"/>
    <lineage>
        <taxon>Bacteria</taxon>
        <taxon>Bacillati</taxon>
        <taxon>Bacillota</taxon>
        <taxon>Bacilli</taxon>
        <taxon>Lactobacillales</taxon>
        <taxon>Streptococcaceae</taxon>
        <taxon>Streptococcus</taxon>
    </lineage>
</organism>
<comment type="function">
    <text evidence="1">Key component of the ribosome quality control system (RQC), a ribosome-associated complex that mediates the extraction of incompletely synthesized nascent chains from stalled ribosomes and their subsequent degradation. RqcH recruits Ala-charged tRNA, and with RqcP directs the elongation of stalled nascent chains on 50S ribosomal subunits, leading to non-templated C-terminal alanine extensions (Ala tail). The Ala tail promotes nascent chain degradation. May add between 1 and at least 8 Ala residues. Binds to stalled 50S ribosomal subunits.</text>
</comment>
<comment type="subunit">
    <text evidence="1 2">Associates with stalled 50S ribosomal subunits, binds to RqcH (By similarity). Recombinant protein interacts with the N-terminal 30 kDa of human fibronectin (FN1) (PubMed:27834729).</text>
</comment>
<comment type="domain">
    <text evidence="2">The N-terminus (residues 1-268) and C-terminus (271-552) form 2 separate domains; the N-terminus is globular while the C-terminus is elongated. The N-terminus binds to S.suis cells while the C-terminus binds to human HEp-2 cells. Incubation with the C-terminus stimulates ERK and p38 phosphorylation in HEp-2 cells.</text>
</comment>
<comment type="disruption phenotype">
    <text evidence="2">About 25% decreased adherence to human HEp-2 cells, about 50% decrease in binding to immobilized fibronectin. HEp-2 cells treated with mutant bacteria secrete less IL-6 and IL-8, activate ERK and p38 more slowly and to a lesser extent than with wild-type bacteria.</text>
</comment>
<comment type="miscellaneous">
    <text evidence="2">Repeated attempts to crystallize a full-length protein yields proteins cleaved between the N- and C-terminal domains.</text>
</comment>
<comment type="similarity">
    <text evidence="1">Belongs to the NEMF family.</text>
</comment>
<keyword id="KW-0002">3D-structure</keyword>
<keyword id="KW-0130">Cell adhesion</keyword>
<keyword id="KW-0175">Coiled coil</keyword>
<keyword id="KW-0648">Protein biosynthesis</keyword>
<keyword id="KW-0694">RNA-binding</keyword>
<keyword id="KW-0699">rRNA-binding</keyword>
<keyword id="KW-0820">tRNA-binding</keyword>
<name>RQCH_STRSY</name>
<proteinExistence type="evidence at protein level"/>
<dbReference type="EMBL" id="CP000407">
    <property type="protein sequence ID" value="ABP90458.1"/>
    <property type="molecule type" value="Genomic_DNA"/>
</dbReference>
<dbReference type="PDB" id="5H3W">
    <property type="method" value="X-ray"/>
    <property type="resolution" value="2.60 A"/>
    <property type="chains" value="A=272-552, B=271-552"/>
</dbReference>
<dbReference type="PDB" id="5H3X">
    <property type="method" value="X-ray"/>
    <property type="resolution" value="2.10 A"/>
    <property type="chains" value="A=2-268"/>
</dbReference>
<dbReference type="PDBsum" id="5H3W"/>
<dbReference type="PDBsum" id="5H3X"/>
<dbReference type="SMR" id="A4VWG9"/>
<dbReference type="STRING" id="391295.SSU05_1492"/>
<dbReference type="KEGG" id="ssu:SSU05_1492"/>
<dbReference type="eggNOG" id="COG1293">
    <property type="taxonomic scope" value="Bacteria"/>
</dbReference>
<dbReference type="HOGENOM" id="CLU_022481_2_1_9"/>
<dbReference type="BioCyc" id="SSUI391295:GHI8-1545-MONOMER"/>
<dbReference type="GO" id="GO:1990112">
    <property type="term" value="C:RQC complex"/>
    <property type="evidence" value="ECO:0007669"/>
    <property type="project" value="TreeGrafter"/>
</dbReference>
<dbReference type="GO" id="GO:0043023">
    <property type="term" value="F:ribosomal large subunit binding"/>
    <property type="evidence" value="ECO:0007669"/>
    <property type="project" value="UniProtKB-UniRule"/>
</dbReference>
<dbReference type="GO" id="GO:0019843">
    <property type="term" value="F:rRNA binding"/>
    <property type="evidence" value="ECO:0007669"/>
    <property type="project" value="UniProtKB-UniRule"/>
</dbReference>
<dbReference type="GO" id="GO:0000049">
    <property type="term" value="F:tRNA binding"/>
    <property type="evidence" value="ECO:0007669"/>
    <property type="project" value="UniProtKB-UniRule"/>
</dbReference>
<dbReference type="GO" id="GO:0007155">
    <property type="term" value="P:cell adhesion"/>
    <property type="evidence" value="ECO:0007669"/>
    <property type="project" value="UniProtKB-KW"/>
</dbReference>
<dbReference type="GO" id="GO:0072344">
    <property type="term" value="P:rescue of stalled ribosome"/>
    <property type="evidence" value="ECO:0007669"/>
    <property type="project" value="UniProtKB-UniRule"/>
</dbReference>
<dbReference type="FunFam" id="2.30.310.10:FF:000004">
    <property type="entry name" value="Fibronectin-binding protein A"/>
    <property type="match status" value="1"/>
</dbReference>
<dbReference type="Gene3D" id="3.40.970.40">
    <property type="entry name" value="fibrinogen binding protein from staphylococcus aureus domain like"/>
    <property type="match status" value="1"/>
</dbReference>
<dbReference type="Gene3D" id="2.30.310.10">
    <property type="entry name" value="ibrinogen binding protein from staphylococcus aureus domain"/>
    <property type="match status" value="1"/>
</dbReference>
<dbReference type="HAMAP" id="MF_00844_B">
    <property type="entry name" value="RqcH_B"/>
    <property type="match status" value="1"/>
</dbReference>
<dbReference type="InterPro" id="IPR008532">
    <property type="entry name" value="NFACT_RNA-bd"/>
</dbReference>
<dbReference type="InterPro" id="IPR051608">
    <property type="entry name" value="RQC_Subunit_NEMF"/>
</dbReference>
<dbReference type="InterPro" id="IPR043682">
    <property type="entry name" value="RqcH_bacterial"/>
</dbReference>
<dbReference type="PANTHER" id="PTHR15239">
    <property type="entry name" value="NUCLEAR EXPORT MEDIATOR FACTOR NEMF"/>
    <property type="match status" value="1"/>
</dbReference>
<dbReference type="PANTHER" id="PTHR15239:SF6">
    <property type="entry name" value="RIBOSOME QUALITY CONTROL COMPLEX SUBUNIT NEMF"/>
    <property type="match status" value="1"/>
</dbReference>
<dbReference type="Pfam" id="PF05670">
    <property type="entry name" value="NFACT-R_1"/>
    <property type="match status" value="1"/>
</dbReference>
<dbReference type="Pfam" id="PF05833">
    <property type="entry name" value="NFACT_N"/>
    <property type="match status" value="1"/>
</dbReference>
<evidence type="ECO:0000255" key="1">
    <source>
        <dbReference type="HAMAP-Rule" id="MF_00844"/>
    </source>
</evidence>
<evidence type="ECO:0000269" key="2">
    <source>
    </source>
</evidence>
<evidence type="ECO:0000303" key="3">
    <source>
    </source>
</evidence>
<evidence type="ECO:0007744" key="4">
    <source>
        <dbReference type="PDB" id="5H3W"/>
    </source>
</evidence>
<evidence type="ECO:0007744" key="5">
    <source>
        <dbReference type="PDB" id="5H3X"/>
    </source>
</evidence>
<evidence type="ECO:0007829" key="6">
    <source>
        <dbReference type="PDB" id="5H3W"/>
    </source>
</evidence>
<evidence type="ECO:0007829" key="7">
    <source>
        <dbReference type="PDB" id="5H3X"/>
    </source>
</evidence>
<reference key="1">
    <citation type="journal article" date="2007" name="PLoS ONE">
        <title>A glimpse of streptococcal toxic shock syndrome from comparative genomics of S. suis 2 Chinese isolates.</title>
        <authorList>
            <person name="Chen C."/>
            <person name="Tang J."/>
            <person name="Dong W."/>
            <person name="Wang C."/>
            <person name="Feng Y."/>
            <person name="Wang J."/>
            <person name="Zheng F."/>
            <person name="Pan X."/>
            <person name="Liu D."/>
            <person name="Li M."/>
            <person name="Song Y."/>
            <person name="Zhu X."/>
            <person name="Sun H."/>
            <person name="Feng T."/>
            <person name="Guo Z."/>
            <person name="Ju A."/>
            <person name="Ge J."/>
            <person name="Dong Y."/>
            <person name="Sun W."/>
            <person name="Jiang Y."/>
            <person name="Wang J."/>
            <person name="Yan J."/>
            <person name="Yang H."/>
            <person name="Wang X."/>
            <person name="Gao G.F."/>
            <person name="Yang R."/>
            <person name="Wang J."/>
            <person name="Yu J."/>
        </authorList>
    </citation>
    <scope>NUCLEOTIDE SEQUENCE [LARGE SCALE GENOMIC DNA]</scope>
    <source>
        <strain>05ZYH33</strain>
    </source>
</reference>
<reference evidence="4 5" key="2">
    <citation type="journal article" date="2016" name="Proc. Natl. Acad. Sci. U.S.A.">
        <title>Structural and functional analysis of an anchorless fibronectin-binding protein FBPS from Gram-positive bacterium Streptococcus suis.</title>
        <authorList>
            <person name="Musyoki A.M."/>
            <person name="Shi Z."/>
            <person name="Xuan C."/>
            <person name="Lu G."/>
            <person name="Qi J."/>
            <person name="Gao F."/>
            <person name="Zheng B."/>
            <person name="Zhang Q."/>
            <person name="Li Y."/>
            <person name="Haywood J."/>
            <person name="Liu C."/>
            <person name="Yan J."/>
            <person name="Shi Y."/>
            <person name="Gao G.F."/>
        </authorList>
    </citation>
    <scope>X-RAY CRYSTALLOGRAPHY (2.10 ANGSTROMS) OF 2-268</scope>
    <scope>X-RAY CRYSTALLOGRAPHY (2.60 ANGSTROMS) OF 271-552</scope>
    <scope>INTERACTION WITH HOST FIBRONECTIN (FN1)</scope>
    <scope>DOMAIN</scope>
    <scope>DISRUPTION PHENOTYPE</scope>
    <scope>COILED COIL</scope>
    <source>
        <strain>05ZYH33</strain>
    </source>
</reference>
<sequence>MSFDGFFLHHMTAELRANLEGGRIQKINQPFEQEIVLNIRSNRQSHKLLLSAHSVFGRVQLTQSDFTNPKVPNTFTMILRKYLQGAIIEEIRQLDNDRILEFSVSNKDEIGDHIQATLIVEIMGKHSNIILVDKSEQKIIEAIKHVGFSQNSYRTILPGSTYIRPPETHSLNPYTVSDEKLFEILSTQELSPKNLQQVFQGLGRDTASELANHLQIDRLKNFRAFFDQATQPSLTDKSYAALPFANSPENQPHFESLSSLLDFYYQDKAERDRVAQQANELIKRVASELEKNRKKLIKQEQELADTETAELVRQKGELLTTYLHQVPNDQSSVRLDNYYTGKELEIELDVALTPSQNAQRYFKKYQKLKEAVKHLTNLIEETKSTIVYLESVDTMLGQASLAEIDEIREELIETGYLKRRHREKIHKRQKPERYLATDGKTIILVGKNNLQNDELTFKMAKKGELWFHAKDIPGSHVVITDNLDPSDEVKTDAAELAAYFSKARHSNLVQVDMIEAKKLHKPTGGKPGFVTYRGQKTLRVTPTEDKIKSMKI</sequence>
<gene>
    <name evidence="1" type="primary">rqcH</name>
    <name evidence="3" type="synonym">fbpS</name>
    <name type="ordered locus">SSU05_1492</name>
</gene>